<dbReference type="EMBL" id="CP017624">
    <property type="protein sequence ID" value="AOW27225.1"/>
    <property type="molecule type" value="Genomic_DNA"/>
</dbReference>
<dbReference type="RefSeq" id="XP_722539.2">
    <property type="nucleotide sequence ID" value="XM_717446.2"/>
</dbReference>
<dbReference type="SMR" id="Q5AM84"/>
<dbReference type="BioGRID" id="1218925">
    <property type="interactions" value="1"/>
</dbReference>
<dbReference type="FunCoup" id="Q5AM84">
    <property type="interactions" value="181"/>
</dbReference>
<dbReference type="STRING" id="237561.Q5AM84"/>
<dbReference type="EnsemblFungi" id="C2_01820C_A-T">
    <property type="protein sequence ID" value="C2_01820C_A-T-p1"/>
    <property type="gene ID" value="C2_01820C_A"/>
</dbReference>
<dbReference type="GeneID" id="3635831"/>
<dbReference type="KEGG" id="cal:CAALFM_C201820CA"/>
<dbReference type="CGD" id="CAL0000187181">
    <property type="gene designation" value="orf19.9068"/>
</dbReference>
<dbReference type="VEuPathDB" id="FungiDB:C2_01820C_A"/>
<dbReference type="eggNOG" id="KOG2253">
    <property type="taxonomic scope" value="Eukaryota"/>
</dbReference>
<dbReference type="HOGENOM" id="CLU_478950_0_0_1"/>
<dbReference type="InParanoid" id="Q5AM84"/>
<dbReference type="OrthoDB" id="6275295at2759"/>
<dbReference type="PRO" id="PR:Q5AM84"/>
<dbReference type="Proteomes" id="UP000000559">
    <property type="component" value="Chromosome 2"/>
</dbReference>
<dbReference type="GO" id="GO:0005737">
    <property type="term" value="C:cytoplasm"/>
    <property type="evidence" value="ECO:0007669"/>
    <property type="project" value="UniProtKB-SubCell"/>
</dbReference>
<dbReference type="GO" id="GO:0005681">
    <property type="term" value="C:spliceosomal complex"/>
    <property type="evidence" value="ECO:0007669"/>
    <property type="project" value="UniProtKB-KW"/>
</dbReference>
<dbReference type="GO" id="GO:0003723">
    <property type="term" value="F:RNA binding"/>
    <property type="evidence" value="ECO:0007669"/>
    <property type="project" value="UniProtKB-KW"/>
</dbReference>
<dbReference type="GO" id="GO:0006397">
    <property type="term" value="P:mRNA processing"/>
    <property type="evidence" value="ECO:0007669"/>
    <property type="project" value="UniProtKB-KW"/>
</dbReference>
<dbReference type="GO" id="GO:0008380">
    <property type="term" value="P:RNA splicing"/>
    <property type="evidence" value="ECO:0007669"/>
    <property type="project" value="UniProtKB-KW"/>
</dbReference>
<dbReference type="Gene3D" id="1.20.1390.10">
    <property type="entry name" value="PWI domain"/>
    <property type="match status" value="1"/>
</dbReference>
<dbReference type="InterPro" id="IPR002483">
    <property type="entry name" value="PWI_dom"/>
</dbReference>
<dbReference type="Pfam" id="PF01480">
    <property type="entry name" value="PWI"/>
    <property type="match status" value="1"/>
</dbReference>
<evidence type="ECO:0000250" key="1"/>
<evidence type="ECO:0000255" key="2"/>
<evidence type="ECO:0000256" key="3">
    <source>
        <dbReference type="SAM" id="MobiDB-lite"/>
    </source>
</evidence>
<evidence type="ECO:0000305" key="4"/>
<reference key="1">
    <citation type="journal article" date="2004" name="Proc. Natl. Acad. Sci. U.S.A.">
        <title>The diploid genome sequence of Candida albicans.</title>
        <authorList>
            <person name="Jones T."/>
            <person name="Federspiel N.A."/>
            <person name="Chibana H."/>
            <person name="Dungan J."/>
            <person name="Kalman S."/>
            <person name="Magee B.B."/>
            <person name="Newport G."/>
            <person name="Thorstenson Y.R."/>
            <person name="Agabian N."/>
            <person name="Magee P.T."/>
            <person name="Davis R.W."/>
            <person name="Scherer S."/>
        </authorList>
    </citation>
    <scope>NUCLEOTIDE SEQUENCE [LARGE SCALE GENOMIC DNA]</scope>
    <source>
        <strain>SC5314 / ATCC MYA-2876</strain>
    </source>
</reference>
<reference key="2">
    <citation type="journal article" date="2007" name="Genome Biol.">
        <title>Assembly of the Candida albicans genome into sixteen supercontigs aligned on the eight chromosomes.</title>
        <authorList>
            <person name="van het Hoog M."/>
            <person name="Rast T.J."/>
            <person name="Martchenko M."/>
            <person name="Grindle S."/>
            <person name="Dignard D."/>
            <person name="Hogues H."/>
            <person name="Cuomo C."/>
            <person name="Berriman M."/>
            <person name="Scherer S."/>
            <person name="Magee B.B."/>
            <person name="Whiteway M."/>
            <person name="Chibana H."/>
            <person name="Nantel A."/>
            <person name="Magee P.T."/>
        </authorList>
    </citation>
    <scope>GENOME REANNOTATION</scope>
    <source>
        <strain>SC5314 / ATCC MYA-2876</strain>
    </source>
</reference>
<reference key="3">
    <citation type="journal article" date="2013" name="Genome Biol.">
        <title>Assembly of a phased diploid Candida albicans genome facilitates allele-specific measurements and provides a simple model for repeat and indel structure.</title>
        <authorList>
            <person name="Muzzey D."/>
            <person name="Schwartz K."/>
            <person name="Weissman J.S."/>
            <person name="Sherlock G."/>
        </authorList>
    </citation>
    <scope>NUCLEOTIDE SEQUENCE [LARGE SCALE GENOMIC DNA]</scope>
    <scope>GENOME REANNOTATION</scope>
    <source>
        <strain>SC5314 / ATCC MYA-2876</strain>
    </source>
</reference>
<protein>
    <recommendedName>
        <fullName>U1 small nuclear ribonucleoprotein component SNU71</fullName>
    </recommendedName>
</protein>
<accession>Q5AM84</accession>
<accession>A0A1D8PGG0</accession>
<accession>Q5ALT3</accession>
<feature type="chain" id="PRO_0000333455" description="U1 small nuclear ribonucleoprotein component SNU71">
    <location>
        <begin position="1"/>
        <end position="614"/>
    </location>
</feature>
<feature type="region of interest" description="Disordered" evidence="3">
    <location>
        <begin position="69"/>
        <end position="98"/>
    </location>
</feature>
<feature type="region of interest" description="Disordered" evidence="3">
    <location>
        <begin position="473"/>
        <end position="526"/>
    </location>
</feature>
<feature type="coiled-coil region" evidence="2">
    <location>
        <begin position="301"/>
        <end position="327"/>
    </location>
</feature>
<feature type="coiled-coil region" evidence="2">
    <location>
        <begin position="450"/>
        <end position="479"/>
    </location>
</feature>
<feature type="compositionally biased region" description="Basic and acidic residues" evidence="3">
    <location>
        <begin position="73"/>
        <end position="85"/>
    </location>
</feature>
<feature type="compositionally biased region" description="Polar residues" evidence="3">
    <location>
        <begin position="490"/>
        <end position="502"/>
    </location>
</feature>
<feature type="compositionally biased region" description="Low complexity" evidence="3">
    <location>
        <begin position="503"/>
        <end position="520"/>
    </location>
</feature>
<proteinExistence type="inferred from homology"/>
<sequence>MTAGDNSIEYVNPYSLSQTINSDLISILDPNGSTTSIIKPQLNYQIPIFKSIDVSNLIDLNNTKIQTQTNETRINKAKDSSDDHQNNPSSKDYDTSGENIVGGIDDIVEDIKLYVSIDKLKPENFQNQLTTIIINQFPTNLKSNLIEQLLKMLMNLKKFVWSFINHELIDLKLIFIKFDQLKDLKWFLLTYCDHISQLIPNVTIITNDKVNEYLNNNKDSSLAKVEPSKITDNLKAKINLIINNPINYTKGKKNSGTEDLDQVLDSYSNYKVDNNDLIDIPNNMKENIIKDIIRFRSRMLLIEKEQRKKEIEMERIKTKNKLKELFEGIKENSTDSTTRKATNKAAVGVTISPKVSHRDEYEDMNDKEYEEFIAVEERNKLNDQYNKKLKSFQNNQHAEYMKLTNKLKSLQNYESDLIDNKLKYIDNLKNYQTNGLAHLYTHNYSDYLRMRSQKRSLEETKDAEDVKQELEEIKKNGGQVASTNTNTNTKPSTYSSGVSELATTSVETPKSTTTTTTTNDTTDEPVAKKSKLAKEIIIIDLPPTVKQSLQEKIVELVENSLGIKDEFLIQVINENLEASNLDNKQELIDELVQVLDEDAESLVNELWDYIETMV</sequence>
<comment type="function">
    <text evidence="1">Component of the U1 snRNP particle, which recognizes and binds the 5'-splice site of pre-mRNA. Together with other non-snRNP factors, U1 snRNP forms the spliceosomal commitment complex, that targets pre-mRNA to the splicing pathway (By similarity).</text>
</comment>
<comment type="subunit">
    <text evidence="1">Component of the U1 snRNP particle, a subcomplex of the spliceosome.</text>
</comment>
<comment type="subcellular location">
    <subcellularLocation>
        <location evidence="1">Cytoplasm</location>
    </subcellularLocation>
    <subcellularLocation>
        <location evidence="1">Nucleus</location>
    </subcellularLocation>
</comment>
<comment type="similarity">
    <text evidence="4">Belongs to the SNU71 family.</text>
</comment>
<keyword id="KW-0175">Coiled coil</keyword>
<keyword id="KW-0963">Cytoplasm</keyword>
<keyword id="KW-0507">mRNA processing</keyword>
<keyword id="KW-0508">mRNA splicing</keyword>
<keyword id="KW-0539">Nucleus</keyword>
<keyword id="KW-1185">Reference proteome</keyword>
<keyword id="KW-0687">Ribonucleoprotein</keyword>
<keyword id="KW-0694">RNA-binding</keyword>
<keyword id="KW-0747">Spliceosome</keyword>
<gene>
    <name type="primary">SNU71</name>
    <name type="ordered locus">CAALFM_C201820CA</name>
    <name type="ORF">CaO19.1491</name>
    <name type="ORF">CaO19.9068</name>
</gene>
<organism>
    <name type="scientific">Candida albicans (strain SC5314 / ATCC MYA-2876)</name>
    <name type="common">Yeast</name>
    <dbReference type="NCBI Taxonomy" id="237561"/>
    <lineage>
        <taxon>Eukaryota</taxon>
        <taxon>Fungi</taxon>
        <taxon>Dikarya</taxon>
        <taxon>Ascomycota</taxon>
        <taxon>Saccharomycotina</taxon>
        <taxon>Pichiomycetes</taxon>
        <taxon>Debaryomycetaceae</taxon>
        <taxon>Candida/Lodderomyces clade</taxon>
        <taxon>Candida</taxon>
    </lineage>
</organism>
<name>SNU71_CANAL</name>